<dbReference type="EMBL" id="CR555306">
    <property type="protein sequence ID" value="CAI06585.1"/>
    <property type="molecule type" value="Genomic_DNA"/>
</dbReference>
<dbReference type="SMR" id="Q5P7X6"/>
<dbReference type="STRING" id="76114.ebA870"/>
<dbReference type="KEGG" id="eba:ebA870"/>
<dbReference type="eggNOG" id="COG0290">
    <property type="taxonomic scope" value="Bacteria"/>
</dbReference>
<dbReference type="HOGENOM" id="CLU_054919_3_2_4"/>
<dbReference type="OrthoDB" id="9806014at2"/>
<dbReference type="Proteomes" id="UP000006552">
    <property type="component" value="Chromosome"/>
</dbReference>
<dbReference type="GO" id="GO:0005829">
    <property type="term" value="C:cytosol"/>
    <property type="evidence" value="ECO:0007669"/>
    <property type="project" value="TreeGrafter"/>
</dbReference>
<dbReference type="GO" id="GO:0016020">
    <property type="term" value="C:membrane"/>
    <property type="evidence" value="ECO:0007669"/>
    <property type="project" value="TreeGrafter"/>
</dbReference>
<dbReference type="GO" id="GO:0043022">
    <property type="term" value="F:ribosome binding"/>
    <property type="evidence" value="ECO:0007669"/>
    <property type="project" value="TreeGrafter"/>
</dbReference>
<dbReference type="GO" id="GO:0003743">
    <property type="term" value="F:translation initiation factor activity"/>
    <property type="evidence" value="ECO:0007669"/>
    <property type="project" value="UniProtKB-UniRule"/>
</dbReference>
<dbReference type="GO" id="GO:0032790">
    <property type="term" value="P:ribosome disassembly"/>
    <property type="evidence" value="ECO:0007669"/>
    <property type="project" value="TreeGrafter"/>
</dbReference>
<dbReference type="FunFam" id="3.10.20.80:FF:000001">
    <property type="entry name" value="Translation initiation factor IF-3"/>
    <property type="match status" value="1"/>
</dbReference>
<dbReference type="FunFam" id="3.30.110.10:FF:000001">
    <property type="entry name" value="Translation initiation factor IF-3"/>
    <property type="match status" value="1"/>
</dbReference>
<dbReference type="Gene3D" id="3.30.110.10">
    <property type="entry name" value="Translation initiation factor 3 (IF-3), C-terminal domain"/>
    <property type="match status" value="1"/>
</dbReference>
<dbReference type="Gene3D" id="3.10.20.80">
    <property type="entry name" value="Translation initiation factor 3 (IF-3), N-terminal domain"/>
    <property type="match status" value="1"/>
</dbReference>
<dbReference type="HAMAP" id="MF_00080">
    <property type="entry name" value="IF_3"/>
    <property type="match status" value="1"/>
</dbReference>
<dbReference type="InterPro" id="IPR036788">
    <property type="entry name" value="T_IF-3_C_sf"/>
</dbReference>
<dbReference type="InterPro" id="IPR036787">
    <property type="entry name" value="T_IF-3_N_sf"/>
</dbReference>
<dbReference type="InterPro" id="IPR019813">
    <property type="entry name" value="Translation_initiation_fac3_CS"/>
</dbReference>
<dbReference type="InterPro" id="IPR001288">
    <property type="entry name" value="Translation_initiation_fac_3"/>
</dbReference>
<dbReference type="InterPro" id="IPR019815">
    <property type="entry name" value="Translation_initiation_fac_3_C"/>
</dbReference>
<dbReference type="InterPro" id="IPR019814">
    <property type="entry name" value="Translation_initiation_fac_3_N"/>
</dbReference>
<dbReference type="NCBIfam" id="TIGR00168">
    <property type="entry name" value="infC"/>
    <property type="match status" value="1"/>
</dbReference>
<dbReference type="PANTHER" id="PTHR10938">
    <property type="entry name" value="TRANSLATION INITIATION FACTOR IF-3"/>
    <property type="match status" value="1"/>
</dbReference>
<dbReference type="PANTHER" id="PTHR10938:SF0">
    <property type="entry name" value="TRANSLATION INITIATION FACTOR IF-3, MITOCHONDRIAL"/>
    <property type="match status" value="1"/>
</dbReference>
<dbReference type="Pfam" id="PF00707">
    <property type="entry name" value="IF3_C"/>
    <property type="match status" value="1"/>
</dbReference>
<dbReference type="Pfam" id="PF05198">
    <property type="entry name" value="IF3_N"/>
    <property type="match status" value="1"/>
</dbReference>
<dbReference type="SUPFAM" id="SSF55200">
    <property type="entry name" value="Translation initiation factor IF3, C-terminal domain"/>
    <property type="match status" value="1"/>
</dbReference>
<dbReference type="SUPFAM" id="SSF54364">
    <property type="entry name" value="Translation initiation factor IF3, N-terminal domain"/>
    <property type="match status" value="1"/>
</dbReference>
<dbReference type="PROSITE" id="PS00938">
    <property type="entry name" value="IF3"/>
    <property type="match status" value="1"/>
</dbReference>
<organism>
    <name type="scientific">Aromatoleum aromaticum (strain DSM 19018 / LMG 30748 / EbN1)</name>
    <name type="common">Azoarcus sp. (strain EbN1)</name>
    <dbReference type="NCBI Taxonomy" id="76114"/>
    <lineage>
        <taxon>Bacteria</taxon>
        <taxon>Pseudomonadati</taxon>
        <taxon>Pseudomonadota</taxon>
        <taxon>Betaproteobacteria</taxon>
        <taxon>Rhodocyclales</taxon>
        <taxon>Rhodocyclaceae</taxon>
        <taxon>Aromatoleum</taxon>
    </lineage>
</organism>
<keyword id="KW-0963">Cytoplasm</keyword>
<keyword id="KW-0396">Initiation factor</keyword>
<keyword id="KW-0648">Protein biosynthesis</keyword>
<keyword id="KW-1185">Reference proteome</keyword>
<name>IF3_AROAE</name>
<accession>Q5P7X6</accession>
<reference key="1">
    <citation type="journal article" date="2005" name="Arch. Microbiol.">
        <title>The genome sequence of an anaerobic aromatic-degrading denitrifying bacterium, strain EbN1.</title>
        <authorList>
            <person name="Rabus R."/>
            <person name="Kube M."/>
            <person name="Heider J."/>
            <person name="Beck A."/>
            <person name="Heitmann K."/>
            <person name="Widdel F."/>
            <person name="Reinhardt R."/>
        </authorList>
    </citation>
    <scope>NUCLEOTIDE SEQUENCE [LARGE SCALE GENOMIC DNA]</scope>
    <source>
        <strain>DSM 19018 / LMG 30748 / EbN1</strain>
    </source>
</reference>
<feature type="chain" id="PRO_0000177473" description="Translation initiation factor IF-3">
    <location>
        <begin position="1"/>
        <end position="173"/>
    </location>
</feature>
<evidence type="ECO:0000255" key="1">
    <source>
        <dbReference type="HAMAP-Rule" id="MF_00080"/>
    </source>
</evidence>
<sequence>MAQEKKQRVNEEISAPEVRLVGEDGEPLGIVSLNAALNAAEEAGLDLVEIAPMAQPPVCRVMDFGKFKYQEQKKAHEARLKQKQVQIKEVKLRPATDENDYQIKLRNLKRFLEEGDKCKVTLRFRGREMAHQEFGLRQLERVKADLEEIGQVEQMPKMEGRQMIMVISPKKNR</sequence>
<protein>
    <recommendedName>
        <fullName evidence="1">Translation initiation factor IF-3</fullName>
    </recommendedName>
</protein>
<comment type="function">
    <text evidence="1">IF-3 binds to the 30S ribosomal subunit and shifts the equilibrium between 70S ribosomes and their 50S and 30S subunits in favor of the free subunits, thus enhancing the availability of 30S subunits on which protein synthesis initiation begins.</text>
</comment>
<comment type="subunit">
    <text evidence="1">Monomer.</text>
</comment>
<comment type="subcellular location">
    <subcellularLocation>
        <location evidence="1">Cytoplasm</location>
    </subcellularLocation>
</comment>
<comment type="similarity">
    <text evidence="1">Belongs to the IF-3 family.</text>
</comment>
<proteinExistence type="inferred from homology"/>
<gene>
    <name evidence="1" type="primary">infC</name>
    <name type="ordered locus">AZOSEA04630</name>
    <name type="ORF">ebA870</name>
</gene>